<reference key="1">
    <citation type="journal article" date="2003" name="Mol. Microbiol.">
        <title>Genome-based analysis of virulence genes in a non-biofilm-forming Staphylococcus epidermidis strain (ATCC 12228).</title>
        <authorList>
            <person name="Zhang Y.-Q."/>
            <person name="Ren S.-X."/>
            <person name="Li H.-L."/>
            <person name="Wang Y.-X."/>
            <person name="Fu G."/>
            <person name="Yang J."/>
            <person name="Qin Z.-Q."/>
            <person name="Miao Y.-G."/>
            <person name="Wang W.-Y."/>
            <person name="Chen R.-S."/>
            <person name="Shen Y."/>
            <person name="Chen Z."/>
            <person name="Yuan Z.-H."/>
            <person name="Zhao G.-P."/>
            <person name="Qu D."/>
            <person name="Danchin A."/>
            <person name="Wen Y.-M."/>
        </authorList>
    </citation>
    <scope>NUCLEOTIDE SEQUENCE [LARGE SCALE GENOMIC DNA]</scope>
    <source>
        <strain>ATCC 12228 / FDA PCI 1200</strain>
    </source>
</reference>
<gene>
    <name type="primary">csd</name>
    <name type="ordered locus">SE_0608</name>
</gene>
<protein>
    <recommendedName>
        <fullName>Probable cysteine desulfurase</fullName>
        <ecNumber>2.8.1.7</ecNumber>
    </recommendedName>
</protein>
<evidence type="ECO:0000250" key="1"/>
<evidence type="ECO:0000305" key="2"/>
<comment type="function">
    <text evidence="1">Catalyzes the removal of elemental sulfur and selenium atoms from L-cysteine, L-cystine, L-selenocysteine, and L-selenocystine to produce L-alanine.</text>
</comment>
<comment type="catalytic activity">
    <reaction>
        <text>(sulfur carrier)-H + L-cysteine = (sulfur carrier)-SH + L-alanine</text>
        <dbReference type="Rhea" id="RHEA:43892"/>
        <dbReference type="Rhea" id="RHEA-COMP:14737"/>
        <dbReference type="Rhea" id="RHEA-COMP:14739"/>
        <dbReference type="ChEBI" id="CHEBI:29917"/>
        <dbReference type="ChEBI" id="CHEBI:35235"/>
        <dbReference type="ChEBI" id="CHEBI:57972"/>
        <dbReference type="ChEBI" id="CHEBI:64428"/>
        <dbReference type="EC" id="2.8.1.7"/>
    </reaction>
</comment>
<comment type="cofactor">
    <cofactor evidence="1">
        <name>pyridoxal 5'-phosphate</name>
        <dbReference type="ChEBI" id="CHEBI:597326"/>
    </cofactor>
</comment>
<comment type="similarity">
    <text evidence="2">Belongs to the class-V pyridoxal-phosphate-dependent aminotransferase family. Csd subfamily.</text>
</comment>
<proteinExistence type="inferred from homology"/>
<keyword id="KW-0663">Pyridoxal phosphate</keyword>
<keyword id="KW-0808">Transferase</keyword>
<sequence>MAEHSFDVKAVIKDFPILEQKVNNKRLAYLDSTATSQTPVQVLNVLDDYYKRYNSNVHRGVHTLGSLATDGYENARETVRRFINAKYFEEIIFTRGTTASINIVAHSYGDANISEGDEIVVTEMEHHANIVPWQQLAKRKNATLKFIPMTKDGELQLDDIKATINDKTKIVAIAHVSNVLGTINDVKTIAKIAHEHGAVISVDGAQSAPHMALDMQDIDADFYSFSGHKMLGPTGIGVLYGKRELLQNMEPVEFGGDMIDFVSKYDSTWADLPTKFEAGTPLIAQAIGLAEAIHYIENLGFNAIHQHEKELTEYAYEQMLTIDGLEIYGPPKDRRAGVITFNLADIHPHDVATAVDTEGVAVRAGHHCAQPLMKWLGVSSTARASFYVYNTKEDVDQLVQALKQTKEFFSYEF</sequence>
<feature type="chain" id="PRO_0000150315" description="Probable cysteine desulfurase">
    <location>
        <begin position="1"/>
        <end position="413"/>
    </location>
</feature>
<feature type="active site" description="Cysteine persulfide intermediate" evidence="1">
    <location>
        <position position="368"/>
    </location>
</feature>
<feature type="modified residue" description="N6-(pyridoxal phosphate)lysine" evidence="1">
    <location>
        <position position="229"/>
    </location>
</feature>
<organism>
    <name type="scientific">Staphylococcus epidermidis (strain ATCC 12228 / FDA PCI 1200)</name>
    <dbReference type="NCBI Taxonomy" id="176280"/>
    <lineage>
        <taxon>Bacteria</taxon>
        <taxon>Bacillati</taxon>
        <taxon>Bacillota</taxon>
        <taxon>Bacilli</taxon>
        <taxon>Bacillales</taxon>
        <taxon>Staphylococcaceae</taxon>
        <taxon>Staphylococcus</taxon>
    </lineage>
</organism>
<accession>Q8CTA4</accession>
<name>CSD_STAES</name>
<dbReference type="EC" id="2.8.1.7"/>
<dbReference type="EMBL" id="AE015929">
    <property type="protein sequence ID" value="AAO04205.1"/>
    <property type="molecule type" value="Genomic_DNA"/>
</dbReference>
<dbReference type="RefSeq" id="NP_764163.1">
    <property type="nucleotide sequence ID" value="NC_004461.1"/>
</dbReference>
<dbReference type="RefSeq" id="WP_002485415.1">
    <property type="nucleotide sequence ID" value="NC_004461.1"/>
</dbReference>
<dbReference type="SMR" id="Q8CTA4"/>
<dbReference type="KEGG" id="sep:SE_0608"/>
<dbReference type="PATRIC" id="fig|176280.10.peg.579"/>
<dbReference type="eggNOG" id="COG0520">
    <property type="taxonomic scope" value="Bacteria"/>
</dbReference>
<dbReference type="HOGENOM" id="CLU_003433_2_5_9"/>
<dbReference type="OrthoDB" id="9804366at2"/>
<dbReference type="Proteomes" id="UP000001411">
    <property type="component" value="Chromosome"/>
</dbReference>
<dbReference type="GO" id="GO:0031071">
    <property type="term" value="F:cysteine desulfurase activity"/>
    <property type="evidence" value="ECO:0007669"/>
    <property type="project" value="UniProtKB-EC"/>
</dbReference>
<dbReference type="GO" id="GO:0030170">
    <property type="term" value="F:pyridoxal phosphate binding"/>
    <property type="evidence" value="ECO:0007669"/>
    <property type="project" value="InterPro"/>
</dbReference>
<dbReference type="GO" id="GO:0006534">
    <property type="term" value="P:cysteine metabolic process"/>
    <property type="evidence" value="ECO:0007669"/>
    <property type="project" value="InterPro"/>
</dbReference>
<dbReference type="CDD" id="cd06453">
    <property type="entry name" value="SufS_like"/>
    <property type="match status" value="1"/>
</dbReference>
<dbReference type="Gene3D" id="3.90.1150.10">
    <property type="entry name" value="Aspartate Aminotransferase, domain 1"/>
    <property type="match status" value="1"/>
</dbReference>
<dbReference type="Gene3D" id="3.40.640.10">
    <property type="entry name" value="Type I PLP-dependent aspartate aminotransferase-like (Major domain)"/>
    <property type="match status" value="1"/>
</dbReference>
<dbReference type="InterPro" id="IPR000192">
    <property type="entry name" value="Aminotrans_V_dom"/>
</dbReference>
<dbReference type="InterPro" id="IPR010970">
    <property type="entry name" value="Cys_dSase_SufS"/>
</dbReference>
<dbReference type="InterPro" id="IPR016454">
    <property type="entry name" value="Cysteine_dSase"/>
</dbReference>
<dbReference type="InterPro" id="IPR015424">
    <property type="entry name" value="PyrdxlP-dep_Trfase"/>
</dbReference>
<dbReference type="InterPro" id="IPR015421">
    <property type="entry name" value="PyrdxlP-dep_Trfase_major"/>
</dbReference>
<dbReference type="InterPro" id="IPR015422">
    <property type="entry name" value="PyrdxlP-dep_Trfase_small"/>
</dbReference>
<dbReference type="NCBIfam" id="TIGR01979">
    <property type="entry name" value="sufS"/>
    <property type="match status" value="1"/>
</dbReference>
<dbReference type="PANTHER" id="PTHR43586">
    <property type="entry name" value="CYSTEINE DESULFURASE"/>
    <property type="match status" value="1"/>
</dbReference>
<dbReference type="PANTHER" id="PTHR43586:SF8">
    <property type="entry name" value="CYSTEINE DESULFURASE 1, CHLOROPLASTIC"/>
    <property type="match status" value="1"/>
</dbReference>
<dbReference type="Pfam" id="PF00266">
    <property type="entry name" value="Aminotran_5"/>
    <property type="match status" value="1"/>
</dbReference>
<dbReference type="PIRSF" id="PIRSF005572">
    <property type="entry name" value="NifS"/>
    <property type="match status" value="1"/>
</dbReference>
<dbReference type="SUPFAM" id="SSF53383">
    <property type="entry name" value="PLP-dependent transferases"/>
    <property type="match status" value="1"/>
</dbReference>